<reference key="1">
    <citation type="journal article" date="2011" name="Plant Cell Physiol.">
        <title>Expression and genome-wide analysis of the xylogen-type gene family.</title>
        <authorList>
            <person name="Kobayashi Y."/>
            <person name="Motose H."/>
            <person name="Iwamoto K."/>
            <person name="Fukuda H."/>
        </authorList>
    </citation>
    <scope>NUCLEOTIDE SEQUENCE [MRNA]</scope>
    <scope>TISSUE SPECIFICITY</scope>
    <scope>DEVELOPMENTAL STAGE</scope>
    <scope>INDUCTION</scope>
    <scope>GENE FAMILY</scope>
    <scope>NOMENCLATURE</scope>
    <source>
        <strain>cv. Columbia</strain>
    </source>
</reference>
<reference key="2">
    <citation type="journal article" date="1999" name="Nature">
        <title>Sequence and analysis of chromosome 2 of the plant Arabidopsis thaliana.</title>
        <authorList>
            <person name="Lin X."/>
            <person name="Kaul S."/>
            <person name="Rounsley S.D."/>
            <person name="Shea T.P."/>
            <person name="Benito M.-I."/>
            <person name="Town C.D."/>
            <person name="Fujii C.Y."/>
            <person name="Mason T.M."/>
            <person name="Bowman C.L."/>
            <person name="Barnstead M.E."/>
            <person name="Feldblyum T.V."/>
            <person name="Buell C.R."/>
            <person name="Ketchum K.A."/>
            <person name="Lee J.J."/>
            <person name="Ronning C.M."/>
            <person name="Koo H.L."/>
            <person name="Moffat K.S."/>
            <person name="Cronin L.A."/>
            <person name="Shen M."/>
            <person name="Pai G."/>
            <person name="Van Aken S."/>
            <person name="Umayam L."/>
            <person name="Tallon L.J."/>
            <person name="Gill J.E."/>
            <person name="Adams M.D."/>
            <person name="Carrera A.J."/>
            <person name="Creasy T.H."/>
            <person name="Goodman H.M."/>
            <person name="Somerville C.R."/>
            <person name="Copenhaver G.P."/>
            <person name="Preuss D."/>
            <person name="Nierman W.C."/>
            <person name="White O."/>
            <person name="Eisen J.A."/>
            <person name="Salzberg S.L."/>
            <person name="Fraser C.M."/>
            <person name="Venter J.C."/>
        </authorList>
    </citation>
    <scope>NUCLEOTIDE SEQUENCE [LARGE SCALE GENOMIC DNA]</scope>
    <source>
        <strain>cv. Columbia</strain>
    </source>
</reference>
<reference key="3">
    <citation type="journal article" date="2017" name="Plant J.">
        <title>Araport11: a complete reannotation of the Arabidopsis thaliana reference genome.</title>
        <authorList>
            <person name="Cheng C.Y."/>
            <person name="Krishnakumar V."/>
            <person name="Chan A.P."/>
            <person name="Thibaud-Nissen F."/>
            <person name="Schobel S."/>
            <person name="Town C.D."/>
        </authorList>
    </citation>
    <scope>GENOME REANNOTATION</scope>
    <source>
        <strain>cv. Columbia</strain>
    </source>
</reference>
<reference key="4">
    <citation type="journal article" date="2002" name="Science">
        <title>Functional annotation of a full-length Arabidopsis cDNA collection.</title>
        <authorList>
            <person name="Seki M."/>
            <person name="Narusaka M."/>
            <person name="Kamiya A."/>
            <person name="Ishida J."/>
            <person name="Satou M."/>
            <person name="Sakurai T."/>
            <person name="Nakajima M."/>
            <person name="Enju A."/>
            <person name="Akiyama K."/>
            <person name="Oono Y."/>
            <person name="Muramatsu M."/>
            <person name="Hayashizaki Y."/>
            <person name="Kawai J."/>
            <person name="Carninci P."/>
            <person name="Itoh M."/>
            <person name="Ishii Y."/>
            <person name="Arakawa T."/>
            <person name="Shibata K."/>
            <person name="Shinagawa A."/>
            <person name="Shinozaki K."/>
        </authorList>
    </citation>
    <scope>NUCLEOTIDE SEQUENCE [LARGE SCALE MRNA]</scope>
    <source>
        <strain>cv. Columbia</strain>
    </source>
</reference>
<reference key="5">
    <citation type="journal article" date="2003" name="Science">
        <title>Empirical analysis of transcriptional activity in the Arabidopsis genome.</title>
        <authorList>
            <person name="Yamada K."/>
            <person name="Lim J."/>
            <person name="Dale J.M."/>
            <person name="Chen H."/>
            <person name="Shinn P."/>
            <person name="Palm C.J."/>
            <person name="Southwick A.M."/>
            <person name="Wu H.C."/>
            <person name="Kim C.J."/>
            <person name="Nguyen M."/>
            <person name="Pham P.K."/>
            <person name="Cheuk R.F."/>
            <person name="Karlin-Newmann G."/>
            <person name="Liu S.X."/>
            <person name="Lam B."/>
            <person name="Sakano H."/>
            <person name="Wu T."/>
            <person name="Yu G."/>
            <person name="Miranda M."/>
            <person name="Quach H.L."/>
            <person name="Tripp M."/>
            <person name="Chang C.H."/>
            <person name="Lee J.M."/>
            <person name="Toriumi M.J."/>
            <person name="Chan M.M."/>
            <person name="Tang C.C."/>
            <person name="Onodera C.S."/>
            <person name="Deng J.M."/>
            <person name="Akiyama K."/>
            <person name="Ansari Y."/>
            <person name="Arakawa T."/>
            <person name="Banh J."/>
            <person name="Banno F."/>
            <person name="Bowser L."/>
            <person name="Brooks S.Y."/>
            <person name="Carninci P."/>
            <person name="Chao Q."/>
            <person name="Choy N."/>
            <person name="Enju A."/>
            <person name="Goldsmith A.D."/>
            <person name="Gurjal M."/>
            <person name="Hansen N.F."/>
            <person name="Hayashizaki Y."/>
            <person name="Johnson-Hopson C."/>
            <person name="Hsuan V.W."/>
            <person name="Iida K."/>
            <person name="Karnes M."/>
            <person name="Khan S."/>
            <person name="Koesema E."/>
            <person name="Ishida J."/>
            <person name="Jiang P.X."/>
            <person name="Jones T."/>
            <person name="Kawai J."/>
            <person name="Kamiya A."/>
            <person name="Meyers C."/>
            <person name="Nakajima M."/>
            <person name="Narusaka M."/>
            <person name="Seki M."/>
            <person name="Sakurai T."/>
            <person name="Satou M."/>
            <person name="Tamse R."/>
            <person name="Vaysberg M."/>
            <person name="Wallender E.K."/>
            <person name="Wong C."/>
            <person name="Yamamura Y."/>
            <person name="Yuan S."/>
            <person name="Shinozaki K."/>
            <person name="Davis R.W."/>
            <person name="Theologis A."/>
            <person name="Ecker J.R."/>
        </authorList>
    </citation>
    <scope>NUCLEOTIDE SEQUENCE [LARGE SCALE MRNA]</scope>
    <source>
        <strain>cv. Columbia</strain>
    </source>
</reference>
<reference key="6">
    <citation type="journal article" date="2001" name="Plant Cell Physiol.">
        <title>Isolation and RNA gel blot analysis of genes that could serve as potential molecular markers for leaf senescence in Arabidopsis thaliana.</title>
        <authorList>
            <person name="Yoshida S."/>
            <person name="Ito M."/>
            <person name="Nishida I."/>
            <person name="Watanabe A."/>
        </authorList>
    </citation>
    <scope>NUCLEOTIDE SEQUENCE [MRNA] OF 112-205</scope>
</reference>
<reference key="7">
    <citation type="journal article" date="2013" name="Plant Mol. Biol.">
        <title>Coexpression patterns indicate that GPI-anchored non-specific lipid transfer proteins are involved in accumulation of cuticular wax, suberin and sporopollenin.</title>
        <authorList>
            <person name="Edstam M.M."/>
            <person name="Blomqvist K."/>
            <person name="Ekloef A."/>
            <person name="Wennergren U."/>
            <person name="Edqvist J."/>
        </authorList>
    </citation>
    <scope>GENE FAMILY</scope>
    <scope>NOMENCLATURE</scope>
    <source>
        <strain>cv. Columbia</strain>
    </source>
</reference>
<protein>
    <recommendedName>
        <fullName evidence="9">Non-specific lipid transfer protein GPI-anchored 13</fullName>
        <shortName evidence="9">AtLTPG-13</shortName>
        <shortName evidence="9">Protein LTP-GPI-ANCHORED 13</shortName>
    </recommendedName>
    <alternativeName>
        <fullName evidence="7">Protein YELLOW-LEAF-SPECIFIC GENE 3</fullName>
    </alternativeName>
    <alternativeName>
        <fullName evidence="8">Xylogen-like protein 9</fullName>
        <shortName evidence="8">AtXYLP9</shortName>
        <shortName evidence="8">AtXYP9</shortName>
    </alternativeName>
</protein>
<proteinExistence type="evidence at transcript level"/>
<comment type="function">
    <text evidence="2">Probable lipid transfer protein.</text>
</comment>
<comment type="subcellular location">
    <subcellularLocation>
        <location evidence="3">Cell membrane</location>
        <topology evidence="3">Lipid-anchor</topology>
        <topology evidence="3">GPI-anchor</topology>
    </subcellularLocation>
</comment>
<comment type="tissue specificity">
    <text evidence="6">Expressed preferentially in expanding leaves and sepals, restricted to the distal side (PubMed:21558309). Expressed at low levels in roots and stems (PubMed:21558309).</text>
</comment>
<comment type="developmental stage">
    <text evidence="6">Up-regulated in leaves during natural senescence.</text>
</comment>
<comment type="induction">
    <text evidence="6">By abscisic acid (ABA).</text>
</comment>
<comment type="similarity">
    <text evidence="10">Belongs to the plant LTP family.</text>
</comment>
<gene>
    <name evidence="9" type="primary">LTPG13</name>
    <name evidence="8" type="synonym">XYLP9</name>
    <name evidence="8" type="synonym">XYP9</name>
    <name evidence="7" type="synonym">YLS3</name>
    <name evidence="11" type="ordered locus">At2g44290</name>
</gene>
<keyword id="KW-1003">Cell membrane</keyword>
<keyword id="KW-1015">Disulfide bond</keyword>
<keyword id="KW-0325">Glycoprotein</keyword>
<keyword id="KW-0336">GPI-anchor</keyword>
<keyword id="KW-0449">Lipoprotein</keyword>
<keyword id="KW-0472">Membrane</keyword>
<keyword id="KW-1185">Reference proteome</keyword>
<keyword id="KW-0732">Signal</keyword>
<dbReference type="EMBL" id="AB246328">
    <property type="protein sequence ID" value="BAE73265.1"/>
    <property type="molecule type" value="mRNA"/>
</dbReference>
<dbReference type="EMBL" id="AC004521">
    <property type="protein sequence ID" value="AAC16079.1"/>
    <property type="molecule type" value="Genomic_DNA"/>
</dbReference>
<dbReference type="EMBL" id="CP002685">
    <property type="protein sequence ID" value="AEC10404.1"/>
    <property type="molecule type" value="Genomic_DNA"/>
</dbReference>
<dbReference type="EMBL" id="AK118152">
    <property type="protein sequence ID" value="BAC42777.1"/>
    <property type="molecule type" value="mRNA"/>
</dbReference>
<dbReference type="EMBL" id="BT005512">
    <property type="protein sequence ID" value="AAO63932.1"/>
    <property type="molecule type" value="mRNA"/>
</dbReference>
<dbReference type="EMBL" id="AB047806">
    <property type="protein sequence ID" value="BAB32883.1"/>
    <property type="molecule type" value="mRNA"/>
</dbReference>
<dbReference type="PIR" id="T02385">
    <property type="entry name" value="T02385"/>
</dbReference>
<dbReference type="RefSeq" id="NP_181958.1">
    <property type="nucleotide sequence ID" value="NM_129993.5"/>
</dbReference>
<dbReference type="FunCoup" id="O64864">
    <property type="interactions" value="165"/>
</dbReference>
<dbReference type="STRING" id="3702.O64864"/>
<dbReference type="GlyCosmos" id="O64864">
    <property type="glycosylation" value="3 sites, No reported glycans"/>
</dbReference>
<dbReference type="GlyGen" id="O64864">
    <property type="glycosylation" value="4 sites"/>
</dbReference>
<dbReference type="PaxDb" id="3702-AT2G44290.1"/>
<dbReference type="ProteomicsDB" id="242337"/>
<dbReference type="EnsemblPlants" id="AT2G44290.1">
    <property type="protein sequence ID" value="AT2G44290.1"/>
    <property type="gene ID" value="AT2G44290"/>
</dbReference>
<dbReference type="GeneID" id="819037"/>
<dbReference type="Gramene" id="AT2G44290.1">
    <property type="protein sequence ID" value="AT2G44290.1"/>
    <property type="gene ID" value="AT2G44290"/>
</dbReference>
<dbReference type="KEGG" id="ath:AT2G44290"/>
<dbReference type="Araport" id="AT2G44290"/>
<dbReference type="TAIR" id="AT2G44290">
    <property type="gene designation" value="LTPG13"/>
</dbReference>
<dbReference type="eggNOG" id="ENOG502S0FC">
    <property type="taxonomic scope" value="Eukaryota"/>
</dbReference>
<dbReference type="HOGENOM" id="CLU_089796_1_1_1"/>
<dbReference type="InParanoid" id="O64864"/>
<dbReference type="OMA" id="CHAPPNM"/>
<dbReference type="OrthoDB" id="1938537at2759"/>
<dbReference type="PhylomeDB" id="O64864"/>
<dbReference type="PRO" id="PR:O64864"/>
<dbReference type="Proteomes" id="UP000006548">
    <property type="component" value="Chromosome 2"/>
</dbReference>
<dbReference type="ExpressionAtlas" id="O64864">
    <property type="expression patterns" value="baseline and differential"/>
</dbReference>
<dbReference type="GO" id="GO:0005829">
    <property type="term" value="C:cytosol"/>
    <property type="evidence" value="ECO:0007005"/>
    <property type="project" value="TAIR"/>
</dbReference>
<dbReference type="GO" id="GO:0005886">
    <property type="term" value="C:plasma membrane"/>
    <property type="evidence" value="ECO:0007669"/>
    <property type="project" value="UniProtKB-SubCell"/>
</dbReference>
<dbReference type="GO" id="GO:0098552">
    <property type="term" value="C:side of membrane"/>
    <property type="evidence" value="ECO:0007669"/>
    <property type="project" value="UniProtKB-KW"/>
</dbReference>
<dbReference type="GO" id="GO:0008289">
    <property type="term" value="F:lipid binding"/>
    <property type="evidence" value="ECO:0007669"/>
    <property type="project" value="InterPro"/>
</dbReference>
<dbReference type="GO" id="GO:0006869">
    <property type="term" value="P:lipid transport"/>
    <property type="evidence" value="ECO:0007669"/>
    <property type="project" value="InterPro"/>
</dbReference>
<dbReference type="CDD" id="cd00010">
    <property type="entry name" value="AAI_LTSS"/>
    <property type="match status" value="1"/>
</dbReference>
<dbReference type="FunFam" id="1.10.110.10:FF:000001">
    <property type="entry name" value="Bifunctional inhibitor/lipid-transfer protein/seed storage 2S albumin superfamily protein"/>
    <property type="match status" value="1"/>
</dbReference>
<dbReference type="Gene3D" id="1.10.110.10">
    <property type="entry name" value="Plant lipid-transfer and hydrophobic proteins"/>
    <property type="match status" value="1"/>
</dbReference>
<dbReference type="InterPro" id="IPR036312">
    <property type="entry name" value="Bifun_inhib/LTP/seed_sf"/>
</dbReference>
<dbReference type="InterPro" id="IPR016140">
    <property type="entry name" value="Bifunc_inhib/LTP/seed_store"/>
</dbReference>
<dbReference type="InterPro" id="IPR043325">
    <property type="entry name" value="LTSS"/>
</dbReference>
<dbReference type="InterPro" id="IPR000528">
    <property type="entry name" value="Plant_nsLTP"/>
</dbReference>
<dbReference type="PANTHER" id="PTHR33044">
    <property type="entry name" value="BIFUNCTIONAL INHIBITOR/LIPID-TRANSFER PROTEIN/SEED STORAGE 2S ALBUMIN SUPERFAMILY PROTEIN-RELATED"/>
    <property type="match status" value="1"/>
</dbReference>
<dbReference type="Pfam" id="PF14368">
    <property type="entry name" value="LTP_2"/>
    <property type="match status" value="1"/>
</dbReference>
<dbReference type="PRINTS" id="PR00382">
    <property type="entry name" value="LIPIDTRNSFER"/>
</dbReference>
<dbReference type="SMART" id="SM00499">
    <property type="entry name" value="AAI"/>
    <property type="match status" value="1"/>
</dbReference>
<dbReference type="SUPFAM" id="SSF47699">
    <property type="entry name" value="Bifunctional inhibitor/lipid-transfer protein/seed storage 2S albumin"/>
    <property type="match status" value="1"/>
</dbReference>
<name>LTG13_ARATH</name>
<feature type="signal peptide" evidence="3">
    <location>
        <begin position="1"/>
        <end position="24"/>
    </location>
</feature>
<feature type="chain" id="PRO_0000424703" description="Non-specific lipid transfer protein GPI-anchored 13">
    <location>
        <begin position="25"/>
        <end position="177"/>
    </location>
</feature>
<feature type="propeptide" id="PRO_0000451635" description="Removed in mature form" evidence="3">
    <location>
        <begin position="178"/>
        <end position="205"/>
    </location>
</feature>
<feature type="region of interest" description="Disordered" evidence="5">
    <location>
        <begin position="141"/>
        <end position="176"/>
    </location>
</feature>
<feature type="lipid moiety-binding region" description="GPI-anchor amidated asparagine" evidence="3">
    <location>
        <position position="177"/>
    </location>
</feature>
<feature type="glycosylation site" description="N-linked (GlcNAc...) asparagine" evidence="4">
    <location>
        <position position="93"/>
    </location>
</feature>
<feature type="glycosylation site" description="N-linked (GlcNAc...) asparagine" evidence="4">
    <location>
        <position position="137"/>
    </location>
</feature>
<feature type="glycosylation site" description="N-linked (GlcNAc...) asparagine" evidence="4">
    <location>
        <position position="165"/>
    </location>
</feature>
<feature type="disulfide bond" evidence="1">
    <location>
        <begin position="36"/>
        <end position="77"/>
    </location>
</feature>
<feature type="disulfide bond" evidence="1">
    <location>
        <begin position="46"/>
        <end position="61"/>
    </location>
</feature>
<feature type="disulfide bond" evidence="1">
    <location>
        <begin position="62"/>
        <end position="104"/>
    </location>
</feature>
<feature type="disulfide bond" evidence="1">
    <location>
        <begin position="75"/>
        <end position="113"/>
    </location>
</feature>
<evidence type="ECO:0000250" key="1">
    <source>
        <dbReference type="UniProtKB" id="A0A0B4JDK1"/>
    </source>
</evidence>
<evidence type="ECO:0000250" key="2">
    <source>
        <dbReference type="UniProtKB" id="Q9C7F7"/>
    </source>
</evidence>
<evidence type="ECO:0000255" key="3"/>
<evidence type="ECO:0000255" key="4">
    <source>
        <dbReference type="PROSITE-ProRule" id="PRU00498"/>
    </source>
</evidence>
<evidence type="ECO:0000256" key="5">
    <source>
        <dbReference type="SAM" id="MobiDB-lite"/>
    </source>
</evidence>
<evidence type="ECO:0000269" key="6">
    <source>
    </source>
</evidence>
<evidence type="ECO:0000303" key="7">
    <source>
    </source>
</evidence>
<evidence type="ECO:0000303" key="8">
    <source>
    </source>
</evidence>
<evidence type="ECO:0000303" key="9">
    <source>
    </source>
</evidence>
<evidence type="ECO:0000305" key="10"/>
<evidence type="ECO:0000312" key="11">
    <source>
        <dbReference type="Araport" id="AT2G44290"/>
    </source>
</evidence>
<sequence>MESRKIKVMATAIALIMVAMVVDAAGADKGKDKEECTAQLVGMATCLPYVQGKAKSPTPDCCSGLKQVINSDMKCLCMIIQERNDPDLGLQVNVSLALALPSVCHATADITKCPALLHLDPNSPDAQVFYQLAKGLNETVSASAPTGSASEPTSMSSTPGSSAGNNSGRTTSVPGTNHAQSFSKQWLGLEVVAHFFVIFYIFILV</sequence>
<organism>
    <name type="scientific">Arabidopsis thaliana</name>
    <name type="common">Mouse-ear cress</name>
    <dbReference type="NCBI Taxonomy" id="3702"/>
    <lineage>
        <taxon>Eukaryota</taxon>
        <taxon>Viridiplantae</taxon>
        <taxon>Streptophyta</taxon>
        <taxon>Embryophyta</taxon>
        <taxon>Tracheophyta</taxon>
        <taxon>Spermatophyta</taxon>
        <taxon>Magnoliopsida</taxon>
        <taxon>eudicotyledons</taxon>
        <taxon>Gunneridae</taxon>
        <taxon>Pentapetalae</taxon>
        <taxon>rosids</taxon>
        <taxon>malvids</taxon>
        <taxon>Brassicales</taxon>
        <taxon>Brassicaceae</taxon>
        <taxon>Camelineae</taxon>
        <taxon>Arabidopsis</taxon>
    </lineage>
</organism>
<accession>O64864</accession>
<accession>Q9CAZ6</accession>